<keyword id="KW-1185">Reference proteome</keyword>
<keyword id="KW-0687">Ribonucleoprotein</keyword>
<keyword id="KW-0689">Ribosomal protein</keyword>
<keyword id="KW-0694">RNA-binding</keyword>
<keyword id="KW-0699">rRNA-binding</keyword>
<protein>
    <recommendedName>
        <fullName evidence="1">Small ribosomal subunit protein uS3</fullName>
    </recommendedName>
    <alternativeName>
        <fullName evidence="3">30S ribosomal protein S3</fullName>
    </alternativeName>
</protein>
<evidence type="ECO:0000255" key="1">
    <source>
        <dbReference type="HAMAP-Rule" id="MF_01309"/>
    </source>
</evidence>
<evidence type="ECO:0000256" key="2">
    <source>
        <dbReference type="SAM" id="MobiDB-lite"/>
    </source>
</evidence>
<evidence type="ECO:0000305" key="3"/>
<comment type="function">
    <text evidence="1">Binds the lower part of the 30S subunit head. Binds mRNA in the 70S ribosome, positioning it for translation.</text>
</comment>
<comment type="subunit">
    <text evidence="1">Part of the 30S ribosomal subunit. Forms a tight complex with proteins S10 and S14.</text>
</comment>
<comment type="similarity">
    <text evidence="1">Belongs to the universal ribosomal protein uS3 family.</text>
</comment>
<name>RS3_XANOR</name>
<sequence>MGHKVHPTGIRLGISKDWNSKWYANKGDFAAYLAADLKVREMLRKKLAQAGVSKILIERPAKTARVTIHTARPGVVIGKRGEDIEKLRKEVSELMGVPAHINVTEVRKPELDAQLVAESIAQQLERRIMFRRAMKRSVGNAMRLGALGIKVNVAGRLNGAEIARSEWYREGRVPLHTLRADIDYGFAEASTTYGIIGIKVWIYKGEVFDFSQVGQEKQDDSPRNDRNDRGDRGDRPSRPAREAR</sequence>
<accession>Q5GWU0</accession>
<gene>
    <name evidence="1" type="primary">rpsC</name>
    <name type="ordered locus">XOO3577</name>
</gene>
<proteinExistence type="inferred from homology"/>
<dbReference type="EMBL" id="AE013598">
    <property type="protein sequence ID" value="AAW76831.1"/>
    <property type="molecule type" value="Genomic_DNA"/>
</dbReference>
<dbReference type="SMR" id="Q5GWU0"/>
<dbReference type="STRING" id="291331.XOO3577"/>
<dbReference type="KEGG" id="xoo:XOO3577"/>
<dbReference type="HOGENOM" id="CLU_058591_0_2_6"/>
<dbReference type="Proteomes" id="UP000006735">
    <property type="component" value="Chromosome"/>
</dbReference>
<dbReference type="GO" id="GO:0022627">
    <property type="term" value="C:cytosolic small ribosomal subunit"/>
    <property type="evidence" value="ECO:0007669"/>
    <property type="project" value="TreeGrafter"/>
</dbReference>
<dbReference type="GO" id="GO:0003729">
    <property type="term" value="F:mRNA binding"/>
    <property type="evidence" value="ECO:0007669"/>
    <property type="project" value="UniProtKB-UniRule"/>
</dbReference>
<dbReference type="GO" id="GO:0019843">
    <property type="term" value="F:rRNA binding"/>
    <property type="evidence" value="ECO:0007669"/>
    <property type="project" value="UniProtKB-UniRule"/>
</dbReference>
<dbReference type="GO" id="GO:0003735">
    <property type="term" value="F:structural constituent of ribosome"/>
    <property type="evidence" value="ECO:0007669"/>
    <property type="project" value="InterPro"/>
</dbReference>
<dbReference type="GO" id="GO:0006412">
    <property type="term" value="P:translation"/>
    <property type="evidence" value="ECO:0007669"/>
    <property type="project" value="UniProtKB-UniRule"/>
</dbReference>
<dbReference type="CDD" id="cd02412">
    <property type="entry name" value="KH-II_30S_S3"/>
    <property type="match status" value="1"/>
</dbReference>
<dbReference type="FunFam" id="3.30.1140.32:FF:000001">
    <property type="entry name" value="30S ribosomal protein S3"/>
    <property type="match status" value="1"/>
</dbReference>
<dbReference type="FunFam" id="3.30.300.20:FF:000001">
    <property type="entry name" value="30S ribosomal protein S3"/>
    <property type="match status" value="1"/>
</dbReference>
<dbReference type="Gene3D" id="3.30.300.20">
    <property type="match status" value="1"/>
</dbReference>
<dbReference type="Gene3D" id="3.30.1140.32">
    <property type="entry name" value="Ribosomal protein S3, C-terminal domain"/>
    <property type="match status" value="1"/>
</dbReference>
<dbReference type="HAMAP" id="MF_01309_B">
    <property type="entry name" value="Ribosomal_uS3_B"/>
    <property type="match status" value="1"/>
</dbReference>
<dbReference type="InterPro" id="IPR004087">
    <property type="entry name" value="KH_dom"/>
</dbReference>
<dbReference type="InterPro" id="IPR015946">
    <property type="entry name" value="KH_dom-like_a/b"/>
</dbReference>
<dbReference type="InterPro" id="IPR004044">
    <property type="entry name" value="KH_dom_type_2"/>
</dbReference>
<dbReference type="InterPro" id="IPR009019">
    <property type="entry name" value="KH_sf_prok-type"/>
</dbReference>
<dbReference type="InterPro" id="IPR036419">
    <property type="entry name" value="Ribosomal_S3_C_sf"/>
</dbReference>
<dbReference type="InterPro" id="IPR005704">
    <property type="entry name" value="Ribosomal_uS3_bac-typ"/>
</dbReference>
<dbReference type="InterPro" id="IPR001351">
    <property type="entry name" value="Ribosomal_uS3_C"/>
</dbReference>
<dbReference type="InterPro" id="IPR018280">
    <property type="entry name" value="Ribosomal_uS3_CS"/>
</dbReference>
<dbReference type="NCBIfam" id="TIGR01009">
    <property type="entry name" value="rpsC_bact"/>
    <property type="match status" value="1"/>
</dbReference>
<dbReference type="PANTHER" id="PTHR11760">
    <property type="entry name" value="30S/40S RIBOSOMAL PROTEIN S3"/>
    <property type="match status" value="1"/>
</dbReference>
<dbReference type="PANTHER" id="PTHR11760:SF19">
    <property type="entry name" value="SMALL RIBOSOMAL SUBUNIT PROTEIN US3C"/>
    <property type="match status" value="1"/>
</dbReference>
<dbReference type="Pfam" id="PF07650">
    <property type="entry name" value="KH_2"/>
    <property type="match status" value="1"/>
</dbReference>
<dbReference type="Pfam" id="PF00189">
    <property type="entry name" value="Ribosomal_S3_C"/>
    <property type="match status" value="1"/>
</dbReference>
<dbReference type="SMART" id="SM00322">
    <property type="entry name" value="KH"/>
    <property type="match status" value="1"/>
</dbReference>
<dbReference type="SUPFAM" id="SSF54814">
    <property type="entry name" value="Prokaryotic type KH domain (KH-domain type II)"/>
    <property type="match status" value="1"/>
</dbReference>
<dbReference type="SUPFAM" id="SSF54821">
    <property type="entry name" value="Ribosomal protein S3 C-terminal domain"/>
    <property type="match status" value="1"/>
</dbReference>
<dbReference type="PROSITE" id="PS50823">
    <property type="entry name" value="KH_TYPE_2"/>
    <property type="match status" value="1"/>
</dbReference>
<dbReference type="PROSITE" id="PS00548">
    <property type="entry name" value="RIBOSOMAL_S3"/>
    <property type="match status" value="1"/>
</dbReference>
<organism>
    <name type="scientific">Xanthomonas oryzae pv. oryzae (strain KACC10331 / KXO85)</name>
    <dbReference type="NCBI Taxonomy" id="291331"/>
    <lineage>
        <taxon>Bacteria</taxon>
        <taxon>Pseudomonadati</taxon>
        <taxon>Pseudomonadota</taxon>
        <taxon>Gammaproteobacteria</taxon>
        <taxon>Lysobacterales</taxon>
        <taxon>Lysobacteraceae</taxon>
        <taxon>Xanthomonas</taxon>
    </lineage>
</organism>
<feature type="chain" id="PRO_0000230744" description="Small ribosomal subunit protein uS3">
    <location>
        <begin position="1"/>
        <end position="244"/>
    </location>
</feature>
<feature type="domain" description="KH type-2" evidence="1">
    <location>
        <begin position="39"/>
        <end position="107"/>
    </location>
</feature>
<feature type="region of interest" description="Disordered" evidence="2">
    <location>
        <begin position="213"/>
        <end position="244"/>
    </location>
</feature>
<feature type="compositionally biased region" description="Basic and acidic residues" evidence="2">
    <location>
        <begin position="216"/>
        <end position="244"/>
    </location>
</feature>
<reference key="1">
    <citation type="journal article" date="2005" name="Nucleic Acids Res.">
        <title>The genome sequence of Xanthomonas oryzae pathovar oryzae KACC10331, the bacterial blight pathogen of rice.</title>
        <authorList>
            <person name="Lee B.-M."/>
            <person name="Park Y.-J."/>
            <person name="Park D.-S."/>
            <person name="Kang H.-W."/>
            <person name="Kim J.-G."/>
            <person name="Song E.-S."/>
            <person name="Park I.-C."/>
            <person name="Yoon U.-H."/>
            <person name="Hahn J.-H."/>
            <person name="Koo B.-S."/>
            <person name="Lee G.-B."/>
            <person name="Kim H."/>
            <person name="Park H.-S."/>
            <person name="Yoon K.-O."/>
            <person name="Kim J.-H."/>
            <person name="Jung C.-H."/>
            <person name="Koh N.-H."/>
            <person name="Seo J.-S."/>
            <person name="Go S.-J."/>
        </authorList>
    </citation>
    <scope>NUCLEOTIDE SEQUENCE [LARGE SCALE GENOMIC DNA]</scope>
    <source>
        <strain>KACC10331 / KXO85</strain>
    </source>
</reference>